<evidence type="ECO:0000255" key="1">
    <source>
        <dbReference type="HAMAP-Rule" id="MF_01305"/>
    </source>
</evidence>
<evidence type="ECO:0000256" key="2">
    <source>
        <dbReference type="SAM" id="MobiDB-lite"/>
    </source>
</evidence>
<organism>
    <name type="scientific">Parasynechococcus marenigrum (strain WH8102)</name>
    <dbReference type="NCBI Taxonomy" id="84588"/>
    <lineage>
        <taxon>Bacteria</taxon>
        <taxon>Bacillati</taxon>
        <taxon>Cyanobacteriota</taxon>
        <taxon>Cyanophyceae</taxon>
        <taxon>Synechococcales</taxon>
        <taxon>Prochlorococcaceae</taxon>
        <taxon>Parasynechococcus</taxon>
        <taxon>Parasynechococcus marenigrum</taxon>
    </lineage>
</organism>
<feature type="chain" id="PRO_0000292240" description="Photosystem II reaction center protein J">
    <location>
        <begin position="1"/>
        <end position="66"/>
    </location>
</feature>
<feature type="transmembrane region" description="Helical" evidence="1">
    <location>
        <begin position="37"/>
        <end position="57"/>
    </location>
</feature>
<feature type="region of interest" description="Disordered" evidence="2">
    <location>
        <begin position="1"/>
        <end position="23"/>
    </location>
</feature>
<name>PSBJ_PARMW</name>
<reference key="1">
    <citation type="journal article" date="2003" name="Nature">
        <title>The genome of a motile marine Synechococcus.</title>
        <authorList>
            <person name="Palenik B."/>
            <person name="Brahamsha B."/>
            <person name="Larimer F.W."/>
            <person name="Land M.L."/>
            <person name="Hauser L."/>
            <person name="Chain P."/>
            <person name="Lamerdin J.E."/>
            <person name="Regala W."/>
            <person name="Allen E.E."/>
            <person name="McCarren J."/>
            <person name="Paulsen I.T."/>
            <person name="Dufresne A."/>
            <person name="Partensky F."/>
            <person name="Webb E.A."/>
            <person name="Waterbury J."/>
        </authorList>
    </citation>
    <scope>NUCLEOTIDE SEQUENCE [LARGE SCALE GENOMIC DNA]</scope>
    <source>
        <strain>WH8102</strain>
    </source>
</reference>
<proteinExistence type="inferred from homology"/>
<comment type="function">
    <text evidence="1">One of the components of the core complex of photosystem II (PSII). PSII is a light-driven water:plastoquinone oxidoreductase that uses light energy to abstract electrons from H(2)O, generating O(2) and a proton gradient subsequently used for ATP formation. It consists of a core antenna complex that captures photons, and an electron transfer chain that converts photonic excitation into a charge separation.</text>
</comment>
<comment type="subunit">
    <text evidence="1">PSII is composed of 1 copy each of membrane proteins PsbA, PsbB, PsbC, PsbD, PsbE, PsbF, PsbH, PsbI, PsbJ, PsbK, PsbL, PsbM, PsbT, PsbX, PsbY, PsbZ, Psb30/Ycf12, peripheral proteins PsbO, CyanoQ (PsbQ), PsbU, PsbV and a large number of cofactors. It forms dimeric complexes.</text>
</comment>
<comment type="subcellular location">
    <subcellularLocation>
        <location evidence="1">Cellular thylakoid membrane</location>
        <topology evidence="1">Single-pass membrane protein</topology>
    </subcellularLocation>
</comment>
<comment type="similarity">
    <text evidence="1">Belongs to the PsbJ family.</text>
</comment>
<dbReference type="EMBL" id="BX569689">
    <property type="protein sequence ID" value="CAE06716.1"/>
    <property type="molecule type" value="Genomic_DNA"/>
</dbReference>
<dbReference type="RefSeq" id="WP_011127077.1">
    <property type="nucleotide sequence ID" value="NC_005070.1"/>
</dbReference>
<dbReference type="SMR" id="Q7U9Q2"/>
<dbReference type="STRING" id="84588.SYNW0201"/>
<dbReference type="KEGG" id="syw:SYNW0201"/>
<dbReference type="eggNOG" id="ENOG5030SSD">
    <property type="taxonomic scope" value="Bacteria"/>
</dbReference>
<dbReference type="HOGENOM" id="CLU_2829784_0_0_3"/>
<dbReference type="BioCyc" id="MetaCyc:TX72_RS01000-MONOMER"/>
<dbReference type="Proteomes" id="UP000001422">
    <property type="component" value="Chromosome"/>
</dbReference>
<dbReference type="GO" id="GO:0009539">
    <property type="term" value="C:photosystem II reaction center"/>
    <property type="evidence" value="ECO:0007669"/>
    <property type="project" value="InterPro"/>
</dbReference>
<dbReference type="GO" id="GO:0031676">
    <property type="term" value="C:plasma membrane-derived thylakoid membrane"/>
    <property type="evidence" value="ECO:0007669"/>
    <property type="project" value="UniProtKB-SubCell"/>
</dbReference>
<dbReference type="GO" id="GO:0015979">
    <property type="term" value="P:photosynthesis"/>
    <property type="evidence" value="ECO:0007669"/>
    <property type="project" value="UniProtKB-UniRule"/>
</dbReference>
<dbReference type="Gene3D" id="6.10.250.2070">
    <property type="match status" value="1"/>
</dbReference>
<dbReference type="HAMAP" id="MF_01305">
    <property type="entry name" value="PSII_PsbJ"/>
    <property type="match status" value="1"/>
</dbReference>
<dbReference type="InterPro" id="IPR002682">
    <property type="entry name" value="PSII_PsbJ"/>
</dbReference>
<dbReference type="InterPro" id="IPR037267">
    <property type="entry name" value="PSII_PsbJ_sf"/>
</dbReference>
<dbReference type="NCBIfam" id="NF002722">
    <property type="entry name" value="PRK02565.1"/>
    <property type="match status" value="1"/>
</dbReference>
<dbReference type="Pfam" id="PF01788">
    <property type="entry name" value="PsbJ"/>
    <property type="match status" value="1"/>
</dbReference>
<dbReference type="SUPFAM" id="SSF161021">
    <property type="entry name" value="Photosystem II reaction center protein J, PsbJ"/>
    <property type="match status" value="1"/>
</dbReference>
<sequence>MSGNKSPFPDGRIPDRLPDGRPAVPWRSRWTEGVLPLWLVATAGGMAVLFVVGLFFYGSYTGVGSA</sequence>
<protein>
    <recommendedName>
        <fullName evidence="1">Photosystem II reaction center protein J</fullName>
        <shortName evidence="1">PSII-J</shortName>
    </recommendedName>
</protein>
<accession>Q7U9Q2</accession>
<keyword id="KW-0472">Membrane</keyword>
<keyword id="KW-0602">Photosynthesis</keyword>
<keyword id="KW-0604">Photosystem II</keyword>
<keyword id="KW-0674">Reaction center</keyword>
<keyword id="KW-0793">Thylakoid</keyword>
<keyword id="KW-0812">Transmembrane</keyword>
<keyword id="KW-1133">Transmembrane helix</keyword>
<gene>
    <name evidence="1" type="primary">psbJ</name>
    <name type="ordered locus">SYNW0201</name>
</gene>